<sequence length="118" mass="13041">MSDNPQEYELDWDVEKRLKLNDAGLVPAIVQADGTNEVLMMAWMDTHALAYTLATRRGTYFSRSRNEYWIKGLTSGNVQEVTGLALDCDGDTVLLTVKQTGGACHTGAHTCFDNDVLL</sequence>
<name>HIS3_CORGL</name>
<gene>
    <name evidence="1" type="primary">hisI</name>
    <name type="ordered locus">Cgl2093</name>
    <name type="ordered locus">cg2296</name>
</gene>
<evidence type="ECO:0000255" key="1">
    <source>
        <dbReference type="HAMAP-Rule" id="MF_01021"/>
    </source>
</evidence>
<reference key="1">
    <citation type="journal article" date="2003" name="Appl. Microbiol. Biotechnol.">
        <title>The Corynebacterium glutamicum genome: features and impacts on biotechnological processes.</title>
        <authorList>
            <person name="Ikeda M."/>
            <person name="Nakagawa S."/>
        </authorList>
    </citation>
    <scope>NUCLEOTIDE SEQUENCE [LARGE SCALE GENOMIC DNA]</scope>
    <source>
        <strain>ATCC 13032 / DSM 20300 / JCM 1318 / BCRC 11384 / CCUG 27702 / LMG 3730 / NBRC 12168 / NCIMB 10025 / NRRL B-2784 / 534</strain>
    </source>
</reference>
<reference key="2">
    <citation type="journal article" date="2003" name="J. Biotechnol.">
        <title>The complete Corynebacterium glutamicum ATCC 13032 genome sequence and its impact on the production of L-aspartate-derived amino acids and vitamins.</title>
        <authorList>
            <person name="Kalinowski J."/>
            <person name="Bathe B."/>
            <person name="Bartels D."/>
            <person name="Bischoff N."/>
            <person name="Bott M."/>
            <person name="Burkovski A."/>
            <person name="Dusch N."/>
            <person name="Eggeling L."/>
            <person name="Eikmanns B.J."/>
            <person name="Gaigalat L."/>
            <person name="Goesmann A."/>
            <person name="Hartmann M."/>
            <person name="Huthmacher K."/>
            <person name="Kraemer R."/>
            <person name="Linke B."/>
            <person name="McHardy A.C."/>
            <person name="Meyer F."/>
            <person name="Moeckel B."/>
            <person name="Pfefferle W."/>
            <person name="Puehler A."/>
            <person name="Rey D.A."/>
            <person name="Rueckert C."/>
            <person name="Rupp O."/>
            <person name="Sahm H."/>
            <person name="Wendisch V.F."/>
            <person name="Wiegraebe I."/>
            <person name="Tauch A."/>
        </authorList>
    </citation>
    <scope>NUCLEOTIDE SEQUENCE [LARGE SCALE GENOMIC DNA]</scope>
    <source>
        <strain>ATCC 13032 / DSM 20300 / JCM 1318 / BCRC 11384 / CCUG 27702 / LMG 3730 / NBRC 12168 / NCIMB 10025 / NRRL B-2784 / 534</strain>
    </source>
</reference>
<comment type="function">
    <text evidence="1">Catalyzes the hydrolysis of the adenine ring of phosphoribosyl-AMP.</text>
</comment>
<comment type="catalytic activity">
    <reaction evidence="1">
        <text>1-(5-phospho-beta-D-ribosyl)-5'-AMP + H2O = 1-(5-phospho-beta-D-ribosyl)-5-[(5-phospho-beta-D-ribosylamino)methylideneamino]imidazole-4-carboxamide</text>
        <dbReference type="Rhea" id="RHEA:20049"/>
        <dbReference type="ChEBI" id="CHEBI:15377"/>
        <dbReference type="ChEBI" id="CHEBI:58435"/>
        <dbReference type="ChEBI" id="CHEBI:59457"/>
        <dbReference type="EC" id="3.5.4.19"/>
    </reaction>
</comment>
<comment type="cofactor">
    <cofactor evidence="1">
        <name>Mg(2+)</name>
        <dbReference type="ChEBI" id="CHEBI:18420"/>
    </cofactor>
    <text evidence="1">Binds 1 Mg(2+) ion per subunit.</text>
</comment>
<comment type="cofactor">
    <cofactor evidence="1">
        <name>Zn(2+)</name>
        <dbReference type="ChEBI" id="CHEBI:29105"/>
    </cofactor>
    <text evidence="1">Binds 1 zinc ion per subunit.</text>
</comment>
<comment type="pathway">
    <text evidence="1">Amino-acid biosynthesis; L-histidine biosynthesis; L-histidine from 5-phospho-alpha-D-ribose 1-diphosphate: step 3/9.</text>
</comment>
<comment type="subunit">
    <text evidence="1">Homodimer.</text>
</comment>
<comment type="subcellular location">
    <subcellularLocation>
        <location evidence="1">Cytoplasm</location>
    </subcellularLocation>
</comment>
<comment type="similarity">
    <text evidence="1">Belongs to the PRA-CH family.</text>
</comment>
<proteinExistence type="inferred from homology"/>
<dbReference type="EC" id="3.5.4.19" evidence="1"/>
<dbReference type="EMBL" id="BA000036">
    <property type="protein sequence ID" value="BAB99486.1"/>
    <property type="molecule type" value="Genomic_DNA"/>
</dbReference>
<dbReference type="EMBL" id="BX927154">
    <property type="protein sequence ID" value="CAF20429.1"/>
    <property type="molecule type" value="Genomic_DNA"/>
</dbReference>
<dbReference type="RefSeq" id="NP_601292.1">
    <property type="nucleotide sequence ID" value="NC_003450.3"/>
</dbReference>
<dbReference type="RefSeq" id="WP_011014876.1">
    <property type="nucleotide sequence ID" value="NC_006958.1"/>
</dbReference>
<dbReference type="SMR" id="Q8NNT9"/>
<dbReference type="STRING" id="196627.cg2296"/>
<dbReference type="GeneID" id="1020044"/>
<dbReference type="KEGG" id="cgb:cg2296"/>
<dbReference type="KEGG" id="cgl:Cgl2093"/>
<dbReference type="PATRIC" id="fig|196627.13.peg.2029"/>
<dbReference type="eggNOG" id="COG0139">
    <property type="taxonomic scope" value="Bacteria"/>
</dbReference>
<dbReference type="HOGENOM" id="CLU_048577_5_1_11"/>
<dbReference type="OrthoDB" id="9795769at2"/>
<dbReference type="BioCyc" id="CORYNE:G18NG-11685-MONOMER"/>
<dbReference type="UniPathway" id="UPA00031">
    <property type="reaction ID" value="UER00008"/>
</dbReference>
<dbReference type="Proteomes" id="UP000000582">
    <property type="component" value="Chromosome"/>
</dbReference>
<dbReference type="Proteomes" id="UP000001009">
    <property type="component" value="Chromosome"/>
</dbReference>
<dbReference type="GO" id="GO:0005737">
    <property type="term" value="C:cytoplasm"/>
    <property type="evidence" value="ECO:0007669"/>
    <property type="project" value="UniProtKB-SubCell"/>
</dbReference>
<dbReference type="GO" id="GO:0000287">
    <property type="term" value="F:magnesium ion binding"/>
    <property type="evidence" value="ECO:0007669"/>
    <property type="project" value="UniProtKB-UniRule"/>
</dbReference>
<dbReference type="GO" id="GO:0004635">
    <property type="term" value="F:phosphoribosyl-AMP cyclohydrolase activity"/>
    <property type="evidence" value="ECO:0007669"/>
    <property type="project" value="UniProtKB-UniRule"/>
</dbReference>
<dbReference type="GO" id="GO:0008270">
    <property type="term" value="F:zinc ion binding"/>
    <property type="evidence" value="ECO:0007669"/>
    <property type="project" value="UniProtKB-UniRule"/>
</dbReference>
<dbReference type="GO" id="GO:0000105">
    <property type="term" value="P:L-histidine biosynthetic process"/>
    <property type="evidence" value="ECO:0007669"/>
    <property type="project" value="UniProtKB-UniRule"/>
</dbReference>
<dbReference type="FunFam" id="3.10.20.810:FF:000001">
    <property type="entry name" value="Histidine biosynthesis bifunctional protein HisIE"/>
    <property type="match status" value="1"/>
</dbReference>
<dbReference type="Gene3D" id="3.10.20.810">
    <property type="entry name" value="Phosphoribosyl-AMP cyclohydrolase"/>
    <property type="match status" value="1"/>
</dbReference>
<dbReference type="HAMAP" id="MF_01021">
    <property type="entry name" value="HisI"/>
    <property type="match status" value="1"/>
</dbReference>
<dbReference type="InterPro" id="IPR026660">
    <property type="entry name" value="PRA-CH"/>
</dbReference>
<dbReference type="InterPro" id="IPR002496">
    <property type="entry name" value="PRib_AMP_CycHydrolase_dom"/>
</dbReference>
<dbReference type="InterPro" id="IPR038019">
    <property type="entry name" value="PRib_AMP_CycHydrolase_sf"/>
</dbReference>
<dbReference type="NCBIfam" id="NF000768">
    <property type="entry name" value="PRK00051.1"/>
    <property type="match status" value="1"/>
</dbReference>
<dbReference type="PANTHER" id="PTHR42945">
    <property type="entry name" value="HISTIDINE BIOSYNTHESIS BIFUNCTIONAL PROTEIN"/>
    <property type="match status" value="1"/>
</dbReference>
<dbReference type="PANTHER" id="PTHR42945:SF11">
    <property type="entry name" value="PHOSPHORIBOSYL-AMP CYCLOHYDROLASE"/>
    <property type="match status" value="1"/>
</dbReference>
<dbReference type="Pfam" id="PF01502">
    <property type="entry name" value="PRA-CH"/>
    <property type="match status" value="1"/>
</dbReference>
<dbReference type="SUPFAM" id="SSF141734">
    <property type="entry name" value="HisI-like"/>
    <property type="match status" value="1"/>
</dbReference>
<keyword id="KW-0028">Amino-acid biosynthesis</keyword>
<keyword id="KW-0963">Cytoplasm</keyword>
<keyword id="KW-0368">Histidine biosynthesis</keyword>
<keyword id="KW-0378">Hydrolase</keyword>
<keyword id="KW-0460">Magnesium</keyword>
<keyword id="KW-0479">Metal-binding</keyword>
<keyword id="KW-1185">Reference proteome</keyword>
<keyword id="KW-0862">Zinc</keyword>
<organism>
    <name type="scientific">Corynebacterium glutamicum (strain ATCC 13032 / DSM 20300 / JCM 1318 / BCRC 11384 / CCUG 27702 / LMG 3730 / NBRC 12168 / NCIMB 10025 / NRRL B-2784 / 534)</name>
    <dbReference type="NCBI Taxonomy" id="196627"/>
    <lineage>
        <taxon>Bacteria</taxon>
        <taxon>Bacillati</taxon>
        <taxon>Actinomycetota</taxon>
        <taxon>Actinomycetes</taxon>
        <taxon>Mycobacteriales</taxon>
        <taxon>Corynebacteriaceae</taxon>
        <taxon>Corynebacterium</taxon>
    </lineage>
</organism>
<protein>
    <recommendedName>
        <fullName evidence="1">Phosphoribosyl-AMP cyclohydrolase</fullName>
        <shortName evidence="1">PRA-CH</shortName>
        <ecNumber evidence="1">3.5.4.19</ecNumber>
    </recommendedName>
</protein>
<accession>Q8NNT9</accession>
<feature type="chain" id="PRO_0000136475" description="Phosphoribosyl-AMP cyclohydrolase">
    <location>
        <begin position="1"/>
        <end position="118"/>
    </location>
</feature>
<feature type="binding site" evidence="1">
    <location>
        <position position="87"/>
    </location>
    <ligand>
        <name>Mg(2+)</name>
        <dbReference type="ChEBI" id="CHEBI:18420"/>
    </ligand>
</feature>
<feature type="binding site" evidence="1">
    <location>
        <position position="88"/>
    </location>
    <ligand>
        <name>Zn(2+)</name>
        <dbReference type="ChEBI" id="CHEBI:29105"/>
        <note>ligand shared between dimeric partners</note>
    </ligand>
</feature>
<feature type="binding site" evidence="1">
    <location>
        <position position="89"/>
    </location>
    <ligand>
        <name>Mg(2+)</name>
        <dbReference type="ChEBI" id="CHEBI:18420"/>
    </ligand>
</feature>
<feature type="binding site" evidence="1">
    <location>
        <position position="91"/>
    </location>
    <ligand>
        <name>Mg(2+)</name>
        <dbReference type="ChEBI" id="CHEBI:18420"/>
    </ligand>
</feature>
<feature type="binding site" evidence="1">
    <location>
        <position position="104"/>
    </location>
    <ligand>
        <name>Zn(2+)</name>
        <dbReference type="ChEBI" id="CHEBI:29105"/>
        <note>ligand shared between dimeric partners</note>
    </ligand>
</feature>
<feature type="binding site" evidence="1">
    <location>
        <position position="111"/>
    </location>
    <ligand>
        <name>Zn(2+)</name>
        <dbReference type="ChEBI" id="CHEBI:29105"/>
        <note>ligand shared between dimeric partners</note>
    </ligand>
</feature>